<reference key="1">
    <citation type="journal article" date="2009" name="J. Bacteriol.">
        <title>Complete genome sequence of Rhodobacter sphaeroides KD131.</title>
        <authorList>
            <person name="Lim S.-K."/>
            <person name="Kim S.J."/>
            <person name="Cha S.H."/>
            <person name="Oh Y.-K."/>
            <person name="Rhee H.-J."/>
            <person name="Kim M.-S."/>
            <person name="Lee J.K."/>
        </authorList>
    </citation>
    <scope>NUCLEOTIDE SEQUENCE [LARGE SCALE GENOMIC DNA]</scope>
    <source>
        <strain>KD131 / KCTC 12085</strain>
    </source>
</reference>
<accession>B9KKW2</accession>
<evidence type="ECO:0000255" key="1">
    <source>
        <dbReference type="HAMAP-Rule" id="MF_00494"/>
    </source>
</evidence>
<feature type="chain" id="PRO_1000198476" description="Probable transaldolase">
    <location>
        <begin position="1"/>
        <end position="219"/>
    </location>
</feature>
<feature type="active site" description="Schiff-base intermediate with substrate" evidence="1">
    <location>
        <position position="83"/>
    </location>
</feature>
<name>TAL_CERSK</name>
<organism>
    <name type="scientific">Cereibacter sphaeroides (strain KD131 / KCTC 12085)</name>
    <name type="common">Rhodobacter sphaeroides</name>
    <dbReference type="NCBI Taxonomy" id="557760"/>
    <lineage>
        <taxon>Bacteria</taxon>
        <taxon>Pseudomonadati</taxon>
        <taxon>Pseudomonadota</taxon>
        <taxon>Alphaproteobacteria</taxon>
        <taxon>Rhodobacterales</taxon>
        <taxon>Paracoccaceae</taxon>
        <taxon>Cereibacter</taxon>
    </lineage>
</organism>
<comment type="function">
    <text evidence="1">Transaldolase is important for the balance of metabolites in the pentose-phosphate pathway.</text>
</comment>
<comment type="catalytic activity">
    <reaction evidence="1">
        <text>D-sedoheptulose 7-phosphate + D-glyceraldehyde 3-phosphate = D-erythrose 4-phosphate + beta-D-fructose 6-phosphate</text>
        <dbReference type="Rhea" id="RHEA:17053"/>
        <dbReference type="ChEBI" id="CHEBI:16897"/>
        <dbReference type="ChEBI" id="CHEBI:57483"/>
        <dbReference type="ChEBI" id="CHEBI:57634"/>
        <dbReference type="ChEBI" id="CHEBI:59776"/>
        <dbReference type="EC" id="2.2.1.2"/>
    </reaction>
</comment>
<comment type="pathway">
    <text evidence="1">Carbohydrate degradation; pentose phosphate pathway; D-glyceraldehyde 3-phosphate and beta-D-fructose 6-phosphate from D-ribose 5-phosphate and D-xylulose 5-phosphate (non-oxidative stage): step 2/3.</text>
</comment>
<comment type="subcellular location">
    <subcellularLocation>
        <location evidence="1">Cytoplasm</location>
    </subcellularLocation>
</comment>
<comment type="similarity">
    <text evidence="1">Belongs to the transaldolase family. Type 3B subfamily.</text>
</comment>
<dbReference type="EC" id="2.2.1.2" evidence="1"/>
<dbReference type="EMBL" id="CP001150">
    <property type="protein sequence ID" value="ACM01759.1"/>
    <property type="molecule type" value="Genomic_DNA"/>
</dbReference>
<dbReference type="SMR" id="B9KKW2"/>
<dbReference type="GeneID" id="67447295"/>
<dbReference type="KEGG" id="rsk:RSKD131_1899"/>
<dbReference type="HOGENOM" id="CLU_079764_0_0_5"/>
<dbReference type="UniPathway" id="UPA00115">
    <property type="reaction ID" value="UER00414"/>
</dbReference>
<dbReference type="GO" id="GO:0005737">
    <property type="term" value="C:cytoplasm"/>
    <property type="evidence" value="ECO:0007669"/>
    <property type="project" value="UniProtKB-SubCell"/>
</dbReference>
<dbReference type="GO" id="GO:0016832">
    <property type="term" value="F:aldehyde-lyase activity"/>
    <property type="evidence" value="ECO:0007669"/>
    <property type="project" value="InterPro"/>
</dbReference>
<dbReference type="GO" id="GO:0004801">
    <property type="term" value="F:transaldolase activity"/>
    <property type="evidence" value="ECO:0007669"/>
    <property type="project" value="UniProtKB-UniRule"/>
</dbReference>
<dbReference type="GO" id="GO:0005975">
    <property type="term" value="P:carbohydrate metabolic process"/>
    <property type="evidence" value="ECO:0007669"/>
    <property type="project" value="InterPro"/>
</dbReference>
<dbReference type="GO" id="GO:0006098">
    <property type="term" value="P:pentose-phosphate shunt"/>
    <property type="evidence" value="ECO:0007669"/>
    <property type="project" value="UniProtKB-UniRule"/>
</dbReference>
<dbReference type="CDD" id="cd00956">
    <property type="entry name" value="Transaldolase_FSA"/>
    <property type="match status" value="1"/>
</dbReference>
<dbReference type="FunFam" id="3.20.20.70:FF:000018">
    <property type="entry name" value="Probable transaldolase"/>
    <property type="match status" value="1"/>
</dbReference>
<dbReference type="Gene3D" id="3.20.20.70">
    <property type="entry name" value="Aldolase class I"/>
    <property type="match status" value="1"/>
</dbReference>
<dbReference type="HAMAP" id="MF_00494">
    <property type="entry name" value="Transaldolase_3b"/>
    <property type="match status" value="1"/>
</dbReference>
<dbReference type="InterPro" id="IPR013785">
    <property type="entry name" value="Aldolase_TIM"/>
</dbReference>
<dbReference type="InterPro" id="IPR001585">
    <property type="entry name" value="TAL/FSA"/>
</dbReference>
<dbReference type="InterPro" id="IPR022999">
    <property type="entry name" value="Transaldolase_3B"/>
</dbReference>
<dbReference type="InterPro" id="IPR004731">
    <property type="entry name" value="Transaldolase_3B/F6P_aldolase"/>
</dbReference>
<dbReference type="InterPro" id="IPR018225">
    <property type="entry name" value="Transaldolase_AS"/>
</dbReference>
<dbReference type="InterPro" id="IPR033919">
    <property type="entry name" value="TSA/FSA_arc/bac"/>
</dbReference>
<dbReference type="NCBIfam" id="TIGR00875">
    <property type="entry name" value="fsa_talC_mipB"/>
    <property type="match status" value="1"/>
</dbReference>
<dbReference type="PANTHER" id="PTHR10683:SF40">
    <property type="entry name" value="FRUCTOSE-6-PHOSPHATE ALDOLASE 1-RELATED"/>
    <property type="match status" value="1"/>
</dbReference>
<dbReference type="PANTHER" id="PTHR10683">
    <property type="entry name" value="TRANSALDOLASE"/>
    <property type="match status" value="1"/>
</dbReference>
<dbReference type="Pfam" id="PF00923">
    <property type="entry name" value="TAL_FSA"/>
    <property type="match status" value="1"/>
</dbReference>
<dbReference type="SUPFAM" id="SSF51569">
    <property type="entry name" value="Aldolase"/>
    <property type="match status" value="1"/>
</dbReference>
<dbReference type="PROSITE" id="PS01054">
    <property type="entry name" value="TRANSALDOLASE_1"/>
    <property type="match status" value="1"/>
</dbReference>
<dbReference type="PROSITE" id="PS00958">
    <property type="entry name" value="TRANSALDOLASE_2"/>
    <property type="match status" value="1"/>
</dbReference>
<gene>
    <name evidence="1" type="primary">tal</name>
    <name type="ordered locus">RSKD131_1899</name>
</gene>
<keyword id="KW-0963">Cytoplasm</keyword>
<keyword id="KW-0570">Pentose shunt</keyword>
<keyword id="KW-0704">Schiff base</keyword>
<keyword id="KW-0808">Transferase</keyword>
<proteinExistence type="inferred from homology"/>
<protein>
    <recommendedName>
        <fullName evidence="1">Probable transaldolase</fullName>
        <ecNumber evidence="1">2.2.1.2</ecNumber>
    </recommendedName>
</protein>
<sequence length="219" mass="23391">MKFFVDSADVAAIAELNALGMVDGVTTNPSLILKSGRNILEVTKEICNLVSGPVSAEVVAAKAEDMIEEGRHLAEIAPNIAVKVPLTWDGLRACKVLSDEGRMVNVTLCFSVNQALLAAKAGATFISPFIGRLDDINLDGMELIADIRQVYDNYDFKTEVLAASVRTPNHVADCARIGADVITAPPAVIKALANHVLTDKGLDMFNADWAKTGQSILLK</sequence>